<organism>
    <name type="scientific">Oncorhynchus clarkii</name>
    <name type="common">Cutthroat trout</name>
    <name type="synonym">Salmo clarkii</name>
    <dbReference type="NCBI Taxonomy" id="30962"/>
    <lineage>
        <taxon>Eukaryota</taxon>
        <taxon>Metazoa</taxon>
        <taxon>Chordata</taxon>
        <taxon>Craniata</taxon>
        <taxon>Vertebrata</taxon>
        <taxon>Euteleostomi</taxon>
        <taxon>Actinopterygii</taxon>
        <taxon>Neopterygii</taxon>
        <taxon>Teleostei</taxon>
        <taxon>Protacanthopterygii</taxon>
        <taxon>Salmoniformes</taxon>
        <taxon>Salmonidae</taxon>
        <taxon>Salmoninae</taxon>
        <taxon>Oncorhynchus</taxon>
    </lineage>
</organism>
<accession>P20684</accession>
<comment type="function">
    <text evidence="2">Component of the cytochrome c oxidase, the last enzyme in the mitochondrial electron transport chain which drives oxidative phosphorylation. The respiratory chain contains 3 multisubunit complexes succinate dehydrogenase (complex II, CII), ubiquinol-cytochrome c oxidoreductase (cytochrome b-c1 complex, complex III, CIII) and cytochrome c oxidase (complex IV, CIV), that cooperate to transfer electrons derived from NADH and succinate to molecular oxygen, creating an electrochemical gradient over the inner membrane that drives transmembrane transport and the ATP synthase. Cytochrome c oxidase is the component of the respiratory chain that catalyzes the reduction of oxygen to water. Electrons originating from reduced cytochrome c in the intermembrane space (IMS) are transferred via the dinuclear copper A center (CU(A)) of subunit 2 and heme A of subunit 1 to the active site in subunit 1, a binuclear center (BNC) formed by heme A3 and copper B (CU(B)). The BNC reduces molecular oxygen to 2 water molecules using 4 electrons from cytochrome c in the IMS and 4 protons from the mitochondrial matrix.</text>
</comment>
<comment type="catalytic activity">
    <reaction evidence="2">
        <text>4 Fe(II)-[cytochrome c] + O2 + 8 H(+)(in) = 4 Fe(III)-[cytochrome c] + 2 H2O + 4 H(+)(out)</text>
        <dbReference type="Rhea" id="RHEA:11436"/>
        <dbReference type="Rhea" id="RHEA-COMP:10350"/>
        <dbReference type="Rhea" id="RHEA-COMP:14399"/>
        <dbReference type="ChEBI" id="CHEBI:15377"/>
        <dbReference type="ChEBI" id="CHEBI:15378"/>
        <dbReference type="ChEBI" id="CHEBI:15379"/>
        <dbReference type="ChEBI" id="CHEBI:29033"/>
        <dbReference type="ChEBI" id="CHEBI:29034"/>
        <dbReference type="EC" id="7.1.1.9"/>
    </reaction>
    <physiologicalReaction direction="left-to-right" evidence="2">
        <dbReference type="Rhea" id="RHEA:11437"/>
    </physiologicalReaction>
</comment>
<comment type="subunit">
    <text evidence="1">Component of the cytochrome c oxidase (complex IV, CIV), a multisubunit enzyme composed of 14 subunits. The complex is composed of a catalytic core of 3 subunits MT-CO1, MT-CO2 and MT-CO3, encoded in the mitochondrial DNA, and 11 supernumerary subunits COX4I, COX5A, COX5B, COX6A, COX6B, COX6C, COX7A, COX7B, COX7C, COX8 and NDUFA4, which are encoded in the nuclear genome. The complex exists as a monomer or a dimer and forms supercomplexes (SCs) in the inner mitochondrial membrane with NADH-ubiquinone oxidoreductase (complex I, CI) and ubiquinol-cytochrome c oxidoreductase (cytochrome b-c1 complex, complex III, CIII), resulting in different assemblies (supercomplex SCI(1)III(2)IV(1) and megacomplex MCI(2)III(2)IV(2)).</text>
</comment>
<comment type="subcellular location">
    <subcellularLocation>
        <location evidence="1">Mitochondrion inner membrane</location>
        <topology evidence="1">Multi-pass membrane protein</topology>
    </subcellularLocation>
</comment>
<comment type="similarity">
    <text evidence="3">Belongs to the cytochrome c oxidase subunit 3 family.</text>
</comment>
<name>COX3_ONCCL</name>
<keyword id="KW-0472">Membrane</keyword>
<keyword id="KW-0496">Mitochondrion</keyword>
<keyword id="KW-0999">Mitochondrion inner membrane</keyword>
<keyword id="KW-1278">Translocase</keyword>
<keyword id="KW-0812">Transmembrane</keyword>
<keyword id="KW-1133">Transmembrane helix</keyword>
<reference key="1">
    <citation type="journal article" date="1989" name="J. Mol. Evol.">
        <title>Variation in salmonid mitochondrial DNA: evolutionary constraints and mechanisms of substitution.</title>
        <authorList>
            <person name="Thomas W.K."/>
            <person name="Beckenbach A.T."/>
        </authorList>
    </citation>
    <scope>NUCLEOTIDE SEQUENCE</scope>
</reference>
<evidence type="ECO:0000250" key="1">
    <source>
        <dbReference type="UniProtKB" id="P00415"/>
    </source>
</evidence>
<evidence type="ECO:0000250" key="2">
    <source>
        <dbReference type="UniProtKB" id="P00420"/>
    </source>
</evidence>
<evidence type="ECO:0000305" key="3"/>
<protein>
    <recommendedName>
        <fullName>Cytochrome c oxidase subunit 3</fullName>
        <ecNumber>7.1.1.9</ecNumber>
    </recommendedName>
    <alternativeName>
        <fullName>Cytochrome c oxidase polypeptide III</fullName>
    </alternativeName>
</protein>
<feature type="chain" id="PRO_0000183816" description="Cytochrome c oxidase subunit 3">
    <location>
        <begin position="1"/>
        <end position="261"/>
    </location>
</feature>
<feature type="topological domain" description="Mitochondrial matrix" evidence="1">
    <location>
        <begin position="1"/>
        <end position="15"/>
    </location>
</feature>
<feature type="transmembrane region" description="Helical; Name=I" evidence="1">
    <location>
        <begin position="16"/>
        <end position="34"/>
    </location>
</feature>
<feature type="topological domain" description="Mitochondrial intermembrane" evidence="1">
    <location>
        <begin position="35"/>
        <end position="40"/>
    </location>
</feature>
<feature type="transmembrane region" description="Helical; Name=II" evidence="1">
    <location>
        <begin position="41"/>
        <end position="66"/>
    </location>
</feature>
<feature type="topological domain" description="Mitochondrial matrix" evidence="1">
    <location>
        <begin position="67"/>
        <end position="72"/>
    </location>
</feature>
<feature type="transmembrane region" description="Helical; Name=III" evidence="1">
    <location>
        <begin position="73"/>
        <end position="105"/>
    </location>
</feature>
<feature type="topological domain" description="Mitochondrial intermembrane" evidence="1">
    <location>
        <begin position="106"/>
        <end position="128"/>
    </location>
</feature>
<feature type="transmembrane region" description="Helical; Name=IV" evidence="1">
    <location>
        <begin position="129"/>
        <end position="152"/>
    </location>
</feature>
<feature type="topological domain" description="Mitochondrial matrix" evidence="1">
    <location>
        <begin position="153"/>
        <end position="155"/>
    </location>
</feature>
<feature type="transmembrane region" description="Helical; Name=V" evidence="1">
    <location>
        <begin position="156"/>
        <end position="183"/>
    </location>
</feature>
<feature type="topological domain" description="Mitochondrial intermembrane" evidence="1">
    <location>
        <begin position="184"/>
        <end position="190"/>
    </location>
</feature>
<feature type="transmembrane region" description="Helical; Name=VI" evidence="1">
    <location>
        <begin position="191"/>
        <end position="223"/>
    </location>
</feature>
<feature type="topological domain" description="Mitochondrial matrix" evidence="1">
    <location>
        <begin position="224"/>
        <end position="232"/>
    </location>
</feature>
<feature type="transmembrane region" description="Helical; Name=VII" evidence="1">
    <location>
        <begin position="233"/>
        <end position="256"/>
    </location>
</feature>
<feature type="topological domain" description="Mitochondrial intermembrane" evidence="1">
    <location>
        <begin position="257"/>
        <end position="261"/>
    </location>
</feature>
<geneLocation type="mitochondrion"/>
<sequence length="261" mass="29705">MAHQAHAYHMVDPSPWPLTGAIAALLLTSGTAVWFHFHSLTLLTLGNILLLLTMYQWWRDIIREGTFQGHHTPPVQKGLRYGMILFITSEVFFFLGFFWAFYHASLAPTPELGGCWPPTGITTLDPFEVPLLNTAVLLASGVTVTWAHHSIMEGERKQTIQALTLTILLGFYFTFLQGMEYYEAPFTIADGVYGSTFFVATGFHGLHVIIGSTFLAVCLLRQVQYHFTSEHHFGFEAAAWYWHFVDVVWLFLYVSIYWWGS</sequence>
<proteinExistence type="inferred from homology"/>
<gene>
    <name type="primary">mt-co3</name>
    <name type="synonym">coiii</name>
    <name type="synonym">coxiii</name>
    <name type="synonym">mtco3</name>
</gene>
<dbReference type="EC" id="7.1.1.9"/>
<dbReference type="PIR" id="D30396">
    <property type="entry name" value="D30396"/>
</dbReference>
<dbReference type="SMR" id="P20684"/>
<dbReference type="GO" id="GO:0005743">
    <property type="term" value="C:mitochondrial inner membrane"/>
    <property type="evidence" value="ECO:0007669"/>
    <property type="project" value="UniProtKB-SubCell"/>
</dbReference>
<dbReference type="GO" id="GO:0045277">
    <property type="term" value="C:respiratory chain complex IV"/>
    <property type="evidence" value="ECO:0000250"/>
    <property type="project" value="UniProtKB"/>
</dbReference>
<dbReference type="GO" id="GO:0004129">
    <property type="term" value="F:cytochrome-c oxidase activity"/>
    <property type="evidence" value="ECO:0007669"/>
    <property type="project" value="UniProtKB-EC"/>
</dbReference>
<dbReference type="GO" id="GO:0006123">
    <property type="term" value="P:mitochondrial electron transport, cytochrome c to oxygen"/>
    <property type="evidence" value="ECO:0007669"/>
    <property type="project" value="TreeGrafter"/>
</dbReference>
<dbReference type="CDD" id="cd01665">
    <property type="entry name" value="Cyt_c_Oxidase_III"/>
    <property type="match status" value="1"/>
</dbReference>
<dbReference type="FunFam" id="1.10.287.70:FF:000048">
    <property type="entry name" value="Cytochrome c oxidase subunit 3"/>
    <property type="match status" value="1"/>
</dbReference>
<dbReference type="FunFam" id="1.20.120.80:FF:000002">
    <property type="entry name" value="Cytochrome c oxidase subunit 3"/>
    <property type="match status" value="1"/>
</dbReference>
<dbReference type="Gene3D" id="1.10.287.70">
    <property type="match status" value="1"/>
</dbReference>
<dbReference type="Gene3D" id="1.20.120.80">
    <property type="entry name" value="Cytochrome c oxidase, subunit III, four-helix bundle"/>
    <property type="match status" value="1"/>
</dbReference>
<dbReference type="InterPro" id="IPR024791">
    <property type="entry name" value="Cyt_c/ubiquinol_Oxase_su3"/>
</dbReference>
<dbReference type="InterPro" id="IPR033945">
    <property type="entry name" value="Cyt_c_oxase_su3_dom"/>
</dbReference>
<dbReference type="InterPro" id="IPR000298">
    <property type="entry name" value="Cyt_c_oxidase-like_su3"/>
</dbReference>
<dbReference type="InterPro" id="IPR035973">
    <property type="entry name" value="Cyt_c_oxidase_su3-like_sf"/>
</dbReference>
<dbReference type="InterPro" id="IPR013833">
    <property type="entry name" value="Cyt_c_oxidase_su3_a-hlx"/>
</dbReference>
<dbReference type="PANTHER" id="PTHR11403:SF7">
    <property type="entry name" value="CYTOCHROME C OXIDASE SUBUNIT 3"/>
    <property type="match status" value="1"/>
</dbReference>
<dbReference type="PANTHER" id="PTHR11403">
    <property type="entry name" value="CYTOCHROME C OXIDASE SUBUNIT III"/>
    <property type="match status" value="1"/>
</dbReference>
<dbReference type="Pfam" id="PF00510">
    <property type="entry name" value="COX3"/>
    <property type="match status" value="1"/>
</dbReference>
<dbReference type="SUPFAM" id="SSF81452">
    <property type="entry name" value="Cytochrome c oxidase subunit III-like"/>
    <property type="match status" value="1"/>
</dbReference>
<dbReference type="PROSITE" id="PS50253">
    <property type="entry name" value="COX3"/>
    <property type="match status" value="1"/>
</dbReference>